<gene>
    <name type="primary">APS1</name>
    <name type="synonym">YAP19</name>
    <name type="ordered locus">YLR170C</name>
    <name type="ORF">L9470.16</name>
</gene>
<name>AP1S1_YEAST</name>
<protein>
    <recommendedName>
        <fullName>AP-1 complex subunit sigma-1</fullName>
    </recommendedName>
    <alternativeName>
        <fullName>Clathrin assembly protein complex 1 sigma-1 small chain</fullName>
    </alternativeName>
    <alternativeName>
        <fullName>Clathrin coat assembly protein AP19</fullName>
    </alternativeName>
    <alternativeName>
        <fullName>Clathrin coat-associated protein AP19</fullName>
    </alternativeName>
    <alternativeName>
        <fullName>Golgi adaptor AP-1 19 kDa adaptin</fullName>
    </alternativeName>
    <alternativeName>
        <fullName>HA1 19 kDa subunit</fullName>
    </alternativeName>
    <alternativeName>
        <fullName>Sigma1-adaptin</fullName>
    </alternativeName>
</protein>
<dbReference type="EMBL" id="X70279">
    <property type="protein sequence ID" value="CAA49765.1"/>
    <property type="molecule type" value="Genomic_DNA"/>
</dbReference>
<dbReference type="EMBL" id="Z30314">
    <property type="protein sequence ID" value="CAA82959.2"/>
    <property type="molecule type" value="Genomic_DNA"/>
</dbReference>
<dbReference type="EMBL" id="U17246">
    <property type="protein sequence ID" value="AAB67468.1"/>
    <property type="molecule type" value="Genomic_DNA"/>
</dbReference>
<dbReference type="EMBL" id="AY692851">
    <property type="protein sequence ID" value="AAT92870.1"/>
    <property type="molecule type" value="Genomic_DNA"/>
</dbReference>
<dbReference type="EMBL" id="BK006945">
    <property type="protein sequence ID" value="DAA09491.1"/>
    <property type="molecule type" value="Genomic_DNA"/>
</dbReference>
<dbReference type="PIR" id="S37757">
    <property type="entry name" value="S37757"/>
</dbReference>
<dbReference type="RefSeq" id="NP_013271.1">
    <property type="nucleotide sequence ID" value="NM_001182057.1"/>
</dbReference>
<dbReference type="SMR" id="P35181"/>
<dbReference type="BioGRID" id="31442">
    <property type="interactions" value="178"/>
</dbReference>
<dbReference type="ComplexPortal" id="CPX-532">
    <property type="entry name" value="Adaptor complex AP-1"/>
</dbReference>
<dbReference type="ComplexPortal" id="CPX-533">
    <property type="entry name" value="Adaptor complex AP-1R"/>
</dbReference>
<dbReference type="DIP" id="DIP-4806N"/>
<dbReference type="FunCoup" id="P35181">
    <property type="interactions" value="505"/>
</dbReference>
<dbReference type="IntAct" id="P35181">
    <property type="interactions" value="9"/>
</dbReference>
<dbReference type="MINT" id="P35181"/>
<dbReference type="STRING" id="4932.YLR170C"/>
<dbReference type="iPTMnet" id="P35181"/>
<dbReference type="PaxDb" id="4932-YLR170C"/>
<dbReference type="PeptideAtlas" id="P35181"/>
<dbReference type="EnsemblFungi" id="YLR170C_mRNA">
    <property type="protein sequence ID" value="YLR170C"/>
    <property type="gene ID" value="YLR170C"/>
</dbReference>
<dbReference type="GeneID" id="850868"/>
<dbReference type="KEGG" id="sce:YLR170C"/>
<dbReference type="AGR" id="SGD:S000004160"/>
<dbReference type="SGD" id="S000004160">
    <property type="gene designation" value="APS1"/>
</dbReference>
<dbReference type="VEuPathDB" id="FungiDB:YLR170C"/>
<dbReference type="eggNOG" id="KOG0934">
    <property type="taxonomic scope" value="Eukaryota"/>
</dbReference>
<dbReference type="GeneTree" id="ENSGT00970000193372"/>
<dbReference type="HOGENOM" id="CLU_061221_0_0_1"/>
<dbReference type="InParanoid" id="P35181"/>
<dbReference type="OMA" id="KAYHILD"/>
<dbReference type="OrthoDB" id="371463at2759"/>
<dbReference type="BioCyc" id="YEAST:G3O-32299-MONOMER"/>
<dbReference type="Reactome" id="R-SCE-432720">
    <property type="pathway name" value="Lysosome Vesicle Biogenesis"/>
</dbReference>
<dbReference type="BioGRID-ORCS" id="850868">
    <property type="hits" value="0 hits in 10 CRISPR screens"/>
</dbReference>
<dbReference type="PRO" id="PR:P35181"/>
<dbReference type="Proteomes" id="UP000002311">
    <property type="component" value="Chromosome XII"/>
</dbReference>
<dbReference type="RNAct" id="P35181">
    <property type="molecule type" value="protein"/>
</dbReference>
<dbReference type="GO" id="GO:0030121">
    <property type="term" value="C:AP-1 adaptor complex"/>
    <property type="evidence" value="ECO:0000314"/>
    <property type="project" value="SGD"/>
</dbReference>
<dbReference type="GO" id="GO:0005829">
    <property type="term" value="C:cytosol"/>
    <property type="evidence" value="ECO:0007669"/>
    <property type="project" value="GOC"/>
</dbReference>
<dbReference type="GO" id="GO:0005768">
    <property type="term" value="C:endosome"/>
    <property type="evidence" value="ECO:0007669"/>
    <property type="project" value="UniProtKB-SubCell"/>
</dbReference>
<dbReference type="GO" id="GO:0043231">
    <property type="term" value="C:intracellular membrane-bounded organelle"/>
    <property type="evidence" value="ECO:0000318"/>
    <property type="project" value="GO_Central"/>
</dbReference>
<dbReference type="GO" id="GO:0005634">
    <property type="term" value="C:nucleus"/>
    <property type="evidence" value="ECO:0007669"/>
    <property type="project" value="UniProtKB-SubCell"/>
</dbReference>
<dbReference type="GO" id="GO:0035615">
    <property type="term" value="F:clathrin adaptor activity"/>
    <property type="evidence" value="ECO:0007669"/>
    <property type="project" value="InterPro"/>
</dbReference>
<dbReference type="GO" id="GO:0006896">
    <property type="term" value="P:Golgi to vacuole transport"/>
    <property type="evidence" value="ECO:0000315"/>
    <property type="project" value="SGD"/>
</dbReference>
<dbReference type="GO" id="GO:0006886">
    <property type="term" value="P:intracellular protein transport"/>
    <property type="evidence" value="ECO:0007669"/>
    <property type="project" value="InterPro"/>
</dbReference>
<dbReference type="GO" id="GO:0048203">
    <property type="term" value="P:vesicle targeting, trans-Golgi to endosome"/>
    <property type="evidence" value="ECO:0000315"/>
    <property type="project" value="ComplexPortal"/>
</dbReference>
<dbReference type="GO" id="GO:0016192">
    <property type="term" value="P:vesicle-mediated transport"/>
    <property type="evidence" value="ECO:0000318"/>
    <property type="project" value="GO_Central"/>
</dbReference>
<dbReference type="CDD" id="cd14831">
    <property type="entry name" value="AP1_sigma"/>
    <property type="match status" value="1"/>
</dbReference>
<dbReference type="FunFam" id="3.30.450.60:FF:000007">
    <property type="entry name" value="AP complex subunit sigma"/>
    <property type="match status" value="1"/>
</dbReference>
<dbReference type="Gene3D" id="3.30.450.60">
    <property type="match status" value="1"/>
</dbReference>
<dbReference type="InterPro" id="IPR044733">
    <property type="entry name" value="AP1_sigma"/>
</dbReference>
<dbReference type="InterPro" id="IPR016635">
    <property type="entry name" value="AP_complex_ssu"/>
</dbReference>
<dbReference type="InterPro" id="IPR022775">
    <property type="entry name" value="AP_mu_sigma_su"/>
</dbReference>
<dbReference type="InterPro" id="IPR000804">
    <property type="entry name" value="Clathrin_sm-chain_CS"/>
</dbReference>
<dbReference type="InterPro" id="IPR011012">
    <property type="entry name" value="Longin-like_dom_sf"/>
</dbReference>
<dbReference type="PANTHER" id="PTHR11753">
    <property type="entry name" value="ADAPTOR COMPLEXES SMALL SUBUNIT FAMILY"/>
    <property type="match status" value="1"/>
</dbReference>
<dbReference type="Pfam" id="PF01217">
    <property type="entry name" value="Clat_adaptor_s"/>
    <property type="match status" value="1"/>
</dbReference>
<dbReference type="PIRSF" id="PIRSF015588">
    <property type="entry name" value="AP_complex_sigma"/>
    <property type="match status" value="1"/>
</dbReference>
<dbReference type="SUPFAM" id="SSF64356">
    <property type="entry name" value="SNARE-like"/>
    <property type="match status" value="1"/>
</dbReference>
<dbReference type="PROSITE" id="PS00989">
    <property type="entry name" value="CLAT_ADAPTOR_S"/>
    <property type="match status" value="1"/>
</dbReference>
<sequence>MTQLKYLLLVSRQGKIRLKKWYTAMSAGEKAKIVKDLTPTILARKPKMCNIIEYNDHKVVYKRYASLYFIVGMTPDVDNELLTLEIIHRFVETMDTYFGNVCELDIIFNFSKVYDILNEMIMCDGSIAESSRKEVLHHVTVMDTMESNDNLERVLS</sequence>
<keyword id="KW-0963">Cytoplasm</keyword>
<keyword id="KW-0968">Cytoplasmic vesicle</keyword>
<keyword id="KW-0967">Endosome</keyword>
<keyword id="KW-0333">Golgi apparatus</keyword>
<keyword id="KW-0472">Membrane</keyword>
<keyword id="KW-0539">Nucleus</keyword>
<keyword id="KW-0653">Protein transport</keyword>
<keyword id="KW-1185">Reference proteome</keyword>
<keyword id="KW-0813">Transport</keyword>
<organism>
    <name type="scientific">Saccharomyces cerevisiae (strain ATCC 204508 / S288c)</name>
    <name type="common">Baker's yeast</name>
    <dbReference type="NCBI Taxonomy" id="559292"/>
    <lineage>
        <taxon>Eukaryota</taxon>
        <taxon>Fungi</taxon>
        <taxon>Dikarya</taxon>
        <taxon>Ascomycota</taxon>
        <taxon>Saccharomycotina</taxon>
        <taxon>Saccharomycetes</taxon>
        <taxon>Saccharomycetales</taxon>
        <taxon>Saccharomycetaceae</taxon>
        <taxon>Saccharomyces</taxon>
    </lineage>
</organism>
<evidence type="ECO:0000250" key="1">
    <source>
        <dbReference type="UniProtKB" id="Q9P7N2"/>
    </source>
</evidence>
<evidence type="ECO:0000269" key="2">
    <source>
    </source>
</evidence>
<evidence type="ECO:0000269" key="3">
    <source>
    </source>
</evidence>
<evidence type="ECO:0000269" key="4">
    <source>
    </source>
</evidence>
<evidence type="ECO:0000305" key="5"/>
<feature type="chain" id="PRO_0000193803" description="AP-1 complex subunit sigma-1">
    <location>
        <begin position="1"/>
        <end position="156"/>
    </location>
</feature>
<proteinExistence type="evidence at protein level"/>
<reference key="1">
    <citation type="journal article" date="1993" name="Biochim. Biophys. Acta">
        <title>Cloning of the YAP19 gene encoding a putative yeast homolog of AP19, the mammalian small chain of the clathrin-assembly proteins.</title>
        <authorList>
            <person name="Nakai M."/>
            <person name="Takada T."/>
            <person name="Endo T."/>
        </authorList>
    </citation>
    <scope>NUCLEOTIDE SEQUENCE [GENOMIC DNA]</scope>
    <source>
        <strain>SP1</strain>
    </source>
</reference>
<reference key="2">
    <citation type="journal article" date="1994" name="EMBO J.">
        <title>The Saccharomyces cerevisiae APS1 gene encodes a homolog of the small subunit of the mammalian clathrin AP-1 complex: evidence for functional interaction with clathrin at the Golgi complex.</title>
        <authorList>
            <person name="Phan H.L."/>
            <person name="Finlay J.A."/>
            <person name="Chu D.S."/>
            <person name="Tan P.K."/>
            <person name="Kirchhausen T."/>
            <person name="Payne G.S."/>
        </authorList>
    </citation>
    <scope>NUCLEOTIDE SEQUENCE [GENOMIC DNA]</scope>
    <source>
        <strain>GPY 297</strain>
    </source>
</reference>
<reference key="3">
    <citation type="journal article" date="1997" name="Nature">
        <title>The nucleotide sequence of Saccharomyces cerevisiae chromosome XII.</title>
        <authorList>
            <person name="Johnston M."/>
            <person name="Hillier L.W."/>
            <person name="Riles L."/>
            <person name="Albermann K."/>
            <person name="Andre B."/>
            <person name="Ansorge W."/>
            <person name="Benes V."/>
            <person name="Brueckner M."/>
            <person name="Delius H."/>
            <person name="Dubois E."/>
            <person name="Duesterhoeft A."/>
            <person name="Entian K.-D."/>
            <person name="Floeth M."/>
            <person name="Goffeau A."/>
            <person name="Hebling U."/>
            <person name="Heumann K."/>
            <person name="Heuss-Neitzel D."/>
            <person name="Hilbert H."/>
            <person name="Hilger F."/>
            <person name="Kleine K."/>
            <person name="Koetter P."/>
            <person name="Louis E.J."/>
            <person name="Messenguy F."/>
            <person name="Mewes H.-W."/>
            <person name="Miosga T."/>
            <person name="Moestl D."/>
            <person name="Mueller-Auer S."/>
            <person name="Nentwich U."/>
            <person name="Obermaier B."/>
            <person name="Piravandi E."/>
            <person name="Pohl T.M."/>
            <person name="Portetelle D."/>
            <person name="Purnelle B."/>
            <person name="Rechmann S."/>
            <person name="Rieger M."/>
            <person name="Rinke M."/>
            <person name="Rose M."/>
            <person name="Scharfe M."/>
            <person name="Scherens B."/>
            <person name="Scholler P."/>
            <person name="Schwager C."/>
            <person name="Schwarz S."/>
            <person name="Underwood A.P."/>
            <person name="Urrestarazu L.A."/>
            <person name="Vandenbol M."/>
            <person name="Verhasselt P."/>
            <person name="Vierendeels F."/>
            <person name="Voet M."/>
            <person name="Volckaert G."/>
            <person name="Voss H."/>
            <person name="Wambutt R."/>
            <person name="Wedler E."/>
            <person name="Wedler H."/>
            <person name="Zimmermann F.K."/>
            <person name="Zollner A."/>
            <person name="Hani J."/>
            <person name="Hoheisel J.D."/>
        </authorList>
    </citation>
    <scope>NUCLEOTIDE SEQUENCE [LARGE SCALE GENOMIC DNA]</scope>
    <source>
        <strain>ATCC 204508 / S288c</strain>
    </source>
</reference>
<reference key="4">
    <citation type="journal article" date="2014" name="G3 (Bethesda)">
        <title>The reference genome sequence of Saccharomyces cerevisiae: Then and now.</title>
        <authorList>
            <person name="Engel S.R."/>
            <person name="Dietrich F.S."/>
            <person name="Fisk D.G."/>
            <person name="Binkley G."/>
            <person name="Balakrishnan R."/>
            <person name="Costanzo M.C."/>
            <person name="Dwight S.S."/>
            <person name="Hitz B.C."/>
            <person name="Karra K."/>
            <person name="Nash R.S."/>
            <person name="Weng S."/>
            <person name="Wong E.D."/>
            <person name="Lloyd P."/>
            <person name="Skrzypek M.S."/>
            <person name="Miyasato S.R."/>
            <person name="Simison M."/>
            <person name="Cherry J.M."/>
        </authorList>
    </citation>
    <scope>GENOME REANNOTATION</scope>
    <source>
        <strain>ATCC 204508 / S288c</strain>
    </source>
</reference>
<reference key="5">
    <citation type="journal article" date="2007" name="Genome Res.">
        <title>Approaching a complete repository of sequence-verified protein-encoding clones for Saccharomyces cerevisiae.</title>
        <authorList>
            <person name="Hu Y."/>
            <person name="Rolfs A."/>
            <person name="Bhullar B."/>
            <person name="Murthy T.V.S."/>
            <person name="Zhu C."/>
            <person name="Berger M.F."/>
            <person name="Camargo A.A."/>
            <person name="Kelley F."/>
            <person name="McCarron S."/>
            <person name="Jepson D."/>
            <person name="Richardson A."/>
            <person name="Raphael J."/>
            <person name="Moreira D."/>
            <person name="Taycher E."/>
            <person name="Zuo D."/>
            <person name="Mohr S."/>
            <person name="Kane M.F."/>
            <person name="Williamson J."/>
            <person name="Simpson A.J.G."/>
            <person name="Bulyk M.L."/>
            <person name="Harlow E."/>
            <person name="Marsischky G."/>
            <person name="Kolodner R.D."/>
            <person name="LaBaer J."/>
        </authorList>
    </citation>
    <scope>NUCLEOTIDE SEQUENCE [GENOMIC DNA]</scope>
    <source>
        <strain>ATCC 204508 / S288c</strain>
    </source>
</reference>
<reference key="6">
    <citation type="journal article" date="1999" name="Mol. Biol. Cell">
        <title>Adaptor complex-independent clathrin function in yeast.</title>
        <authorList>
            <person name="Yeung B.G."/>
            <person name="Phan H.L."/>
            <person name="Payne G.S."/>
        </authorList>
    </citation>
    <scope>FUNCTION</scope>
    <scope>SUBUNIT</scope>
    <scope>INTERACTION WITH CLATHRIN</scope>
</reference>
<reference key="7">
    <citation type="journal article" date="2003" name="Nature">
        <title>Global analysis of protein expression in yeast.</title>
        <authorList>
            <person name="Ghaemmaghami S."/>
            <person name="Huh W.-K."/>
            <person name="Bower K."/>
            <person name="Howson R.W."/>
            <person name="Belle A."/>
            <person name="Dephoure N."/>
            <person name="O'Shea E.K."/>
            <person name="Weissman J.S."/>
        </authorList>
    </citation>
    <scope>LEVEL OF PROTEIN EXPRESSION [LARGE SCALE ANALYSIS]</scope>
</reference>
<reference key="8">
    <citation type="journal article" date="2016" name="Mol. Biol. Cell">
        <title>The alternate AP-1 adaptor subunit Apm2 interacts with the Mil1 regulatory protein and confers differential cargo sorting.</title>
        <authorList>
            <person name="Whitfield S.T."/>
            <person name="Burston H.E."/>
            <person name="Bean B.D."/>
            <person name="Raghuram N."/>
            <person name="Maldonado-Baez L."/>
            <person name="Davey M."/>
            <person name="Wendland B."/>
            <person name="Conibear E."/>
        </authorList>
    </citation>
    <scope>FUNCTION</scope>
    <scope>SUBUNIT</scope>
</reference>
<comment type="function">
    <text evidence="2 4">Component of the adapter complexes which link clathrin to receptors in coated vesicles (PubMed:10564262). Clathrin-associated protein complexes are believed to interact with the cytoplasmic tails of membrane proteins, leading to their selection and concentration (PubMed:10564262). AP19 is probably a subunit of the Golgi membrane adapter (PubMed:10564262). Component of the AP-1-related (AP-1R) complex, an adapter protein complex that mediates sorting of cargo SNARE SNC1 (PubMed:26658609). In contrast to the APM1-containing AP-1 complex, AP-1R is incapable of sorting CHS3 (PubMed:26658609).</text>
</comment>
<comment type="subunit">
    <text evidence="2 4">Adapter protein complex 1 (AP-1) is a heterotetramer composed of two large adaptins (gamma-type subunit APL4 and beta-type subunit APL2), a medium adaptin (mu-type subunit APM1) and a small adaptin (sigma-type subunit APS1) (PubMed:10564262). AP-1 interacts with clathrin (PubMed:10564262). Also a component of the AP-1R complex composed of at least APM2, APL4 and APS1 (PubMed:26658609).</text>
</comment>
<comment type="interaction">
    <interactant intactId="EBI-2612">
        <id>P35181</id>
    </interactant>
    <interactant intactId="EBI-2206">
        <id>P36000</id>
        <label>APL2</label>
    </interactant>
    <organismsDiffer>false</organismsDiffer>
    <experiments>6</experiments>
</comment>
<comment type="interaction">
    <interactant intactId="EBI-2612">
        <id>P35181</id>
    </interactant>
    <interactant intactId="EBI-33025">
        <id>Q12028</id>
        <label>APL4</label>
    </interactant>
    <organismsDiffer>false</organismsDiffer>
    <experiments>5</experiments>
</comment>
<comment type="interaction">
    <interactant intactId="EBI-2612">
        <id>P35181</id>
    </interactant>
    <interactant intactId="EBI-2624">
        <id>Q00776</id>
        <label>APM1</label>
    </interactant>
    <organismsDiffer>false</organismsDiffer>
    <experiments>5</experiments>
</comment>
<comment type="subcellular location">
    <subcellularLocation>
        <location evidence="1">Cytoplasm</location>
    </subcellularLocation>
    <subcellularLocation>
        <location evidence="1">Nucleus</location>
    </subcellularLocation>
    <subcellularLocation>
        <location evidence="1">Cytoplasmic vesicle</location>
        <location evidence="1">Clathrin-coated vesicle membrane</location>
    </subcellularLocation>
    <subcellularLocation>
        <location evidence="1">Endosome</location>
    </subcellularLocation>
    <subcellularLocation>
        <location evidence="1">Golgi apparatus</location>
    </subcellularLocation>
</comment>
<comment type="miscellaneous">
    <text evidence="3">Present with 6370 molecules/cell in log phase SD medium.</text>
</comment>
<comment type="similarity">
    <text evidence="5">Belongs to the adaptor complexes small subunit family.</text>
</comment>
<accession>P35181</accession>
<accession>D6VYH5</accession>